<reference key="1">
    <citation type="journal article" date="2003" name="Proc. Natl. Acad. Sci. U.S.A.">
        <title>The complete genome sequence of Mycobacterium bovis.</title>
        <authorList>
            <person name="Garnier T."/>
            <person name="Eiglmeier K."/>
            <person name="Camus J.-C."/>
            <person name="Medina N."/>
            <person name="Mansoor H."/>
            <person name="Pryor M."/>
            <person name="Duthoy S."/>
            <person name="Grondin S."/>
            <person name="Lacroix C."/>
            <person name="Monsempe C."/>
            <person name="Simon S."/>
            <person name="Harris B."/>
            <person name="Atkin R."/>
            <person name="Doggett J."/>
            <person name="Mayes R."/>
            <person name="Keating L."/>
            <person name="Wheeler P.R."/>
            <person name="Parkhill J."/>
            <person name="Barrell B.G."/>
            <person name="Cole S.T."/>
            <person name="Gordon S.V."/>
            <person name="Hewinson R.G."/>
        </authorList>
    </citation>
    <scope>NUCLEOTIDE SEQUENCE [LARGE SCALE GENOMIC DNA]</scope>
    <source>
        <strain>ATCC BAA-935 / AF2122/97</strain>
    </source>
</reference>
<reference key="2">
    <citation type="journal article" date="2017" name="Genome Announc.">
        <title>Updated reference genome sequence and annotation of Mycobacterium bovis AF2122/97.</title>
        <authorList>
            <person name="Malone K.M."/>
            <person name="Farrell D."/>
            <person name="Stuber T.P."/>
            <person name="Schubert O.T."/>
            <person name="Aebersold R."/>
            <person name="Robbe-Austerman S."/>
            <person name="Gordon S.V."/>
        </authorList>
    </citation>
    <scope>NUCLEOTIDE SEQUENCE [LARGE SCALE GENOMIC DNA]</scope>
    <scope>GENOME REANNOTATION</scope>
    <source>
        <strain>ATCC BAA-935 / AF2122/97</strain>
    </source>
</reference>
<organism>
    <name type="scientific">Mycobacterium bovis (strain ATCC BAA-935 / AF2122/97)</name>
    <dbReference type="NCBI Taxonomy" id="233413"/>
    <lineage>
        <taxon>Bacteria</taxon>
        <taxon>Bacillati</taxon>
        <taxon>Actinomycetota</taxon>
        <taxon>Actinomycetes</taxon>
        <taxon>Mycobacteriales</taxon>
        <taxon>Mycobacteriaceae</taxon>
        <taxon>Mycobacterium</taxon>
        <taxon>Mycobacterium tuberculosis complex</taxon>
    </lineage>
</organism>
<name>CP132_MYCBO</name>
<feature type="chain" id="PRO_0000052286" description="Putative cytochrome P450 132">
    <location>
        <begin position="1"/>
        <end position="461"/>
    </location>
</feature>
<feature type="binding site" description="axial binding residue" evidence="1">
    <location>
        <position position="409"/>
    </location>
    <ligand>
        <name>heme</name>
        <dbReference type="ChEBI" id="CHEBI:30413"/>
    </ligand>
    <ligandPart>
        <name>Fe</name>
        <dbReference type="ChEBI" id="CHEBI:18248"/>
    </ligandPart>
</feature>
<dbReference type="EC" id="1.14.-.-"/>
<dbReference type="EMBL" id="LT708304">
    <property type="protein sequence ID" value="SIU00032.1"/>
    <property type="molecule type" value="Genomic_DNA"/>
</dbReference>
<dbReference type="RefSeq" id="NP_855081.1">
    <property type="nucleotide sequence ID" value="NC_002945.3"/>
</dbReference>
<dbReference type="RefSeq" id="WP_003407260.1">
    <property type="nucleotide sequence ID" value="NC_002945.4"/>
</dbReference>
<dbReference type="SMR" id="P59954"/>
<dbReference type="KEGG" id="mbo:BQ2027_MB1429C"/>
<dbReference type="PATRIC" id="fig|233413.5.peg.1564"/>
<dbReference type="Proteomes" id="UP000001419">
    <property type="component" value="Chromosome"/>
</dbReference>
<dbReference type="GO" id="GO:0020037">
    <property type="term" value="F:heme binding"/>
    <property type="evidence" value="ECO:0007669"/>
    <property type="project" value="InterPro"/>
</dbReference>
<dbReference type="GO" id="GO:0005506">
    <property type="term" value="F:iron ion binding"/>
    <property type="evidence" value="ECO:0007669"/>
    <property type="project" value="InterPro"/>
</dbReference>
<dbReference type="GO" id="GO:0004497">
    <property type="term" value="F:monooxygenase activity"/>
    <property type="evidence" value="ECO:0007669"/>
    <property type="project" value="UniProtKB-KW"/>
</dbReference>
<dbReference type="GO" id="GO:0016705">
    <property type="term" value="F:oxidoreductase activity, acting on paired donors, with incorporation or reduction of molecular oxygen"/>
    <property type="evidence" value="ECO:0007669"/>
    <property type="project" value="InterPro"/>
</dbReference>
<dbReference type="CDD" id="cd20620">
    <property type="entry name" value="CYP132-like"/>
    <property type="match status" value="1"/>
</dbReference>
<dbReference type="Gene3D" id="1.10.630.10">
    <property type="entry name" value="Cytochrome P450"/>
    <property type="match status" value="1"/>
</dbReference>
<dbReference type="InterPro" id="IPR001128">
    <property type="entry name" value="Cyt_P450"/>
</dbReference>
<dbReference type="InterPro" id="IPR017972">
    <property type="entry name" value="Cyt_P450_CS"/>
</dbReference>
<dbReference type="InterPro" id="IPR002401">
    <property type="entry name" value="Cyt_P450_E_grp-I"/>
</dbReference>
<dbReference type="InterPro" id="IPR036396">
    <property type="entry name" value="Cyt_P450_sf"/>
</dbReference>
<dbReference type="InterPro" id="IPR050196">
    <property type="entry name" value="Cytochrome_P450_Monoox"/>
</dbReference>
<dbReference type="PANTHER" id="PTHR24291:SF50">
    <property type="entry name" value="BIFUNCTIONAL ALBAFLAVENONE MONOOXYGENASE_TERPENE SYNTHASE"/>
    <property type="match status" value="1"/>
</dbReference>
<dbReference type="PANTHER" id="PTHR24291">
    <property type="entry name" value="CYTOCHROME P450 FAMILY 4"/>
    <property type="match status" value="1"/>
</dbReference>
<dbReference type="Pfam" id="PF00067">
    <property type="entry name" value="p450"/>
    <property type="match status" value="1"/>
</dbReference>
<dbReference type="PRINTS" id="PR00463">
    <property type="entry name" value="EP450I"/>
</dbReference>
<dbReference type="PRINTS" id="PR00385">
    <property type="entry name" value="P450"/>
</dbReference>
<dbReference type="SUPFAM" id="SSF48264">
    <property type="entry name" value="Cytochrome P450"/>
    <property type="match status" value="1"/>
</dbReference>
<dbReference type="PROSITE" id="PS00086">
    <property type="entry name" value="CYTOCHROME_P450"/>
    <property type="match status" value="1"/>
</dbReference>
<accession>P59954</accession>
<accession>A0A1R3XY81</accession>
<accession>X2BHI2</accession>
<protein>
    <recommendedName>
        <fullName>Putative cytochrome P450 132</fullName>
        <ecNumber>1.14.-.-</ecNumber>
    </recommendedName>
</protein>
<keyword id="KW-0349">Heme</keyword>
<keyword id="KW-0408">Iron</keyword>
<keyword id="KW-0479">Metal-binding</keyword>
<keyword id="KW-0503">Monooxygenase</keyword>
<keyword id="KW-0560">Oxidoreductase</keyword>
<keyword id="KW-1185">Reference proteome</keyword>
<proteinExistence type="inferred from homology"/>
<sequence length="461" mass="52186">MATATTQRPLKGPAKRMSTWTMTREAITIGFDAGDGFLGRLRGSDITRFRCAGRRFVSISHPDYVDHVLHEARLKYVKSDEYGPIRATAGLNLLTDEGDSWARHRGALNSTFARRHLRGLVGLMIDPIADVTAALVPGAQFDMHQSMVETTLRVVANALFSQDFGPLVQSMHDLATRGLRRAEKLERLGLWGLMPRTVYDTLIWCIYSGVHLPPPLREMQEITLTLDRAINSVIDRRLAEPTNSADLLNVLLSADGGIWPRQRVRDEALTFMLAGHETTANAMSWFWYLMALNPQARDHMLTELDDVLGMRRPTADDLGKLAWTTACLQESQRYFSSVWIIAREAVDDDIIDGHRIRRGTTVVIPIHHIHHDPRWWPDPDRFDPGRFLRCPTDRPRCAYLPFGGGRRICIGQSFALMEMVLMAAIMSQHFTFDLAPGYHVELEATLTLRPKHGVHVIGRRR</sequence>
<evidence type="ECO:0000250" key="1"/>
<evidence type="ECO:0000305" key="2"/>
<comment type="cofactor">
    <cofactor evidence="1">
        <name>heme</name>
        <dbReference type="ChEBI" id="CHEBI:30413"/>
    </cofactor>
</comment>
<comment type="similarity">
    <text evidence="2">Belongs to the cytochrome P450 family.</text>
</comment>
<gene>
    <name type="primary">cyp132</name>
    <name type="ordered locus">BQ2027_MB1429C</name>
</gene>